<organism>
    <name type="scientific">Trichlorobacter lovleyi (strain ATCC BAA-1151 / DSM 17278 / SZ)</name>
    <name type="common">Geobacter lovleyi</name>
    <dbReference type="NCBI Taxonomy" id="398767"/>
    <lineage>
        <taxon>Bacteria</taxon>
        <taxon>Pseudomonadati</taxon>
        <taxon>Thermodesulfobacteriota</taxon>
        <taxon>Desulfuromonadia</taxon>
        <taxon>Geobacterales</taxon>
        <taxon>Geobacteraceae</taxon>
        <taxon>Trichlorobacter</taxon>
    </lineage>
</organism>
<keyword id="KW-1185">Reference proteome</keyword>
<keyword id="KW-0687">Ribonucleoprotein</keyword>
<keyword id="KW-0689">Ribosomal protein</keyword>
<name>RL32_TRIL1</name>
<reference key="1">
    <citation type="submission" date="2008-05" db="EMBL/GenBank/DDBJ databases">
        <title>Complete sequence of chromosome of Geobacter lovleyi SZ.</title>
        <authorList>
            <consortium name="US DOE Joint Genome Institute"/>
            <person name="Lucas S."/>
            <person name="Copeland A."/>
            <person name="Lapidus A."/>
            <person name="Glavina del Rio T."/>
            <person name="Dalin E."/>
            <person name="Tice H."/>
            <person name="Bruce D."/>
            <person name="Goodwin L."/>
            <person name="Pitluck S."/>
            <person name="Chertkov O."/>
            <person name="Meincke L."/>
            <person name="Brettin T."/>
            <person name="Detter J.C."/>
            <person name="Han C."/>
            <person name="Tapia R."/>
            <person name="Kuske C.R."/>
            <person name="Schmutz J."/>
            <person name="Larimer F."/>
            <person name="Land M."/>
            <person name="Hauser L."/>
            <person name="Kyrpides N."/>
            <person name="Mikhailova N."/>
            <person name="Sung Y."/>
            <person name="Fletcher K.E."/>
            <person name="Ritalahti K.M."/>
            <person name="Loeffler F.E."/>
            <person name="Richardson P."/>
        </authorList>
    </citation>
    <scope>NUCLEOTIDE SEQUENCE [LARGE SCALE GENOMIC DNA]</scope>
    <source>
        <strain>ATCC BAA-1151 / DSM 17278 / SZ</strain>
    </source>
</reference>
<dbReference type="EMBL" id="CP001089">
    <property type="protein sequence ID" value="ACD95657.1"/>
    <property type="molecule type" value="Genomic_DNA"/>
</dbReference>
<dbReference type="RefSeq" id="WP_012469996.1">
    <property type="nucleotide sequence ID" value="NC_010814.1"/>
</dbReference>
<dbReference type="SMR" id="B3E2K0"/>
<dbReference type="STRING" id="398767.Glov_1941"/>
<dbReference type="KEGG" id="glo:Glov_1941"/>
<dbReference type="eggNOG" id="COG0333">
    <property type="taxonomic scope" value="Bacteria"/>
</dbReference>
<dbReference type="HOGENOM" id="CLU_129084_1_3_7"/>
<dbReference type="OrthoDB" id="9801927at2"/>
<dbReference type="Proteomes" id="UP000002420">
    <property type="component" value="Chromosome"/>
</dbReference>
<dbReference type="GO" id="GO:0015934">
    <property type="term" value="C:large ribosomal subunit"/>
    <property type="evidence" value="ECO:0007669"/>
    <property type="project" value="InterPro"/>
</dbReference>
<dbReference type="GO" id="GO:0003735">
    <property type="term" value="F:structural constituent of ribosome"/>
    <property type="evidence" value="ECO:0007669"/>
    <property type="project" value="InterPro"/>
</dbReference>
<dbReference type="GO" id="GO:0006412">
    <property type="term" value="P:translation"/>
    <property type="evidence" value="ECO:0007669"/>
    <property type="project" value="UniProtKB-UniRule"/>
</dbReference>
<dbReference type="FunFam" id="1.20.5.640:FF:000001">
    <property type="entry name" value="50S ribosomal protein L32"/>
    <property type="match status" value="1"/>
</dbReference>
<dbReference type="Gene3D" id="1.20.5.640">
    <property type="entry name" value="Single helix bin"/>
    <property type="match status" value="1"/>
</dbReference>
<dbReference type="HAMAP" id="MF_00340">
    <property type="entry name" value="Ribosomal_bL32"/>
    <property type="match status" value="1"/>
</dbReference>
<dbReference type="InterPro" id="IPR002677">
    <property type="entry name" value="Ribosomal_bL32"/>
</dbReference>
<dbReference type="InterPro" id="IPR044957">
    <property type="entry name" value="Ribosomal_bL32_bact"/>
</dbReference>
<dbReference type="InterPro" id="IPR011332">
    <property type="entry name" value="Ribosomal_zn-bd"/>
</dbReference>
<dbReference type="NCBIfam" id="TIGR01031">
    <property type="entry name" value="rpmF_bact"/>
    <property type="match status" value="1"/>
</dbReference>
<dbReference type="PANTHER" id="PTHR35534">
    <property type="entry name" value="50S RIBOSOMAL PROTEIN L32"/>
    <property type="match status" value="1"/>
</dbReference>
<dbReference type="PANTHER" id="PTHR35534:SF1">
    <property type="entry name" value="LARGE RIBOSOMAL SUBUNIT PROTEIN BL32"/>
    <property type="match status" value="1"/>
</dbReference>
<dbReference type="Pfam" id="PF01783">
    <property type="entry name" value="Ribosomal_L32p"/>
    <property type="match status" value="1"/>
</dbReference>
<dbReference type="SUPFAM" id="SSF57829">
    <property type="entry name" value="Zn-binding ribosomal proteins"/>
    <property type="match status" value="1"/>
</dbReference>
<feature type="chain" id="PRO_1000120129" description="Large ribosomal subunit protein bL32">
    <location>
        <begin position="1"/>
        <end position="61"/>
    </location>
</feature>
<feature type="region of interest" description="Disordered" evidence="2">
    <location>
        <begin position="1"/>
        <end position="20"/>
    </location>
</feature>
<feature type="compositionally biased region" description="Basic residues" evidence="2">
    <location>
        <begin position="1"/>
        <end position="16"/>
    </location>
</feature>
<sequence>MAVPKKKTSKSRKNMRRAHDFLTAPSLSVCPQCKSPKMPHRACPSCGTYKGKEVAGAAKQA</sequence>
<proteinExistence type="inferred from homology"/>
<protein>
    <recommendedName>
        <fullName evidence="1">Large ribosomal subunit protein bL32</fullName>
    </recommendedName>
    <alternativeName>
        <fullName evidence="3">50S ribosomal protein L32</fullName>
    </alternativeName>
</protein>
<evidence type="ECO:0000255" key="1">
    <source>
        <dbReference type="HAMAP-Rule" id="MF_00340"/>
    </source>
</evidence>
<evidence type="ECO:0000256" key="2">
    <source>
        <dbReference type="SAM" id="MobiDB-lite"/>
    </source>
</evidence>
<evidence type="ECO:0000305" key="3"/>
<gene>
    <name evidence="1" type="primary">rpmF</name>
    <name type="ordered locus">Glov_1941</name>
</gene>
<comment type="similarity">
    <text evidence="1">Belongs to the bacterial ribosomal protein bL32 family.</text>
</comment>
<accession>B3E2K0</accession>